<evidence type="ECO:0000255" key="1">
    <source>
        <dbReference type="HAMAP-Rule" id="MF_00281"/>
    </source>
</evidence>
<protein>
    <recommendedName>
        <fullName evidence="1">Phenylalanine--tRNA ligase alpha subunit</fullName>
        <ecNumber evidence="1">6.1.1.20</ecNumber>
    </recommendedName>
    <alternativeName>
        <fullName evidence="1">Phenylalanyl-tRNA synthetase alpha subunit</fullName>
        <shortName evidence="1">PheRS</shortName>
    </alternativeName>
</protein>
<name>SYFA_DESHY</name>
<dbReference type="EC" id="6.1.1.20" evidence="1"/>
<dbReference type="EMBL" id="AP008230">
    <property type="protein sequence ID" value="BAE82060.1"/>
    <property type="molecule type" value="Genomic_DNA"/>
</dbReference>
<dbReference type="RefSeq" id="WP_011458978.1">
    <property type="nucleotide sequence ID" value="NC_007907.1"/>
</dbReference>
<dbReference type="SMR" id="Q251I2"/>
<dbReference type="STRING" id="138119.DSY0271"/>
<dbReference type="KEGG" id="dsy:DSY0271"/>
<dbReference type="eggNOG" id="COG0016">
    <property type="taxonomic scope" value="Bacteria"/>
</dbReference>
<dbReference type="HOGENOM" id="CLU_025086_0_1_9"/>
<dbReference type="Proteomes" id="UP000001946">
    <property type="component" value="Chromosome"/>
</dbReference>
<dbReference type="GO" id="GO:0005737">
    <property type="term" value="C:cytoplasm"/>
    <property type="evidence" value="ECO:0007669"/>
    <property type="project" value="UniProtKB-SubCell"/>
</dbReference>
<dbReference type="GO" id="GO:0005524">
    <property type="term" value="F:ATP binding"/>
    <property type="evidence" value="ECO:0007669"/>
    <property type="project" value="UniProtKB-UniRule"/>
</dbReference>
<dbReference type="GO" id="GO:0140096">
    <property type="term" value="F:catalytic activity, acting on a protein"/>
    <property type="evidence" value="ECO:0007669"/>
    <property type="project" value="UniProtKB-ARBA"/>
</dbReference>
<dbReference type="GO" id="GO:0000287">
    <property type="term" value="F:magnesium ion binding"/>
    <property type="evidence" value="ECO:0007669"/>
    <property type="project" value="UniProtKB-UniRule"/>
</dbReference>
<dbReference type="GO" id="GO:0004826">
    <property type="term" value="F:phenylalanine-tRNA ligase activity"/>
    <property type="evidence" value="ECO:0007669"/>
    <property type="project" value="UniProtKB-UniRule"/>
</dbReference>
<dbReference type="GO" id="GO:0016740">
    <property type="term" value="F:transferase activity"/>
    <property type="evidence" value="ECO:0007669"/>
    <property type="project" value="UniProtKB-ARBA"/>
</dbReference>
<dbReference type="GO" id="GO:0000049">
    <property type="term" value="F:tRNA binding"/>
    <property type="evidence" value="ECO:0007669"/>
    <property type="project" value="InterPro"/>
</dbReference>
<dbReference type="GO" id="GO:0006432">
    <property type="term" value="P:phenylalanyl-tRNA aminoacylation"/>
    <property type="evidence" value="ECO:0007669"/>
    <property type="project" value="UniProtKB-UniRule"/>
</dbReference>
<dbReference type="CDD" id="cd00496">
    <property type="entry name" value="PheRS_alpha_core"/>
    <property type="match status" value="1"/>
</dbReference>
<dbReference type="FunFam" id="3.30.930.10:FF:000003">
    <property type="entry name" value="Phenylalanine--tRNA ligase alpha subunit"/>
    <property type="match status" value="1"/>
</dbReference>
<dbReference type="Gene3D" id="3.30.930.10">
    <property type="entry name" value="Bira Bifunctional Protein, Domain 2"/>
    <property type="match status" value="1"/>
</dbReference>
<dbReference type="HAMAP" id="MF_00281">
    <property type="entry name" value="Phe_tRNA_synth_alpha1"/>
    <property type="match status" value="1"/>
</dbReference>
<dbReference type="InterPro" id="IPR006195">
    <property type="entry name" value="aa-tRNA-synth_II"/>
</dbReference>
<dbReference type="InterPro" id="IPR045864">
    <property type="entry name" value="aa-tRNA-synth_II/BPL/LPL"/>
</dbReference>
<dbReference type="InterPro" id="IPR004529">
    <property type="entry name" value="Phe-tRNA-synth_IIc_asu"/>
</dbReference>
<dbReference type="InterPro" id="IPR004188">
    <property type="entry name" value="Phe-tRNA_ligase_II_N"/>
</dbReference>
<dbReference type="InterPro" id="IPR022911">
    <property type="entry name" value="Phe_tRNA_ligase_alpha1_bac"/>
</dbReference>
<dbReference type="InterPro" id="IPR002319">
    <property type="entry name" value="Phenylalanyl-tRNA_Synthase"/>
</dbReference>
<dbReference type="InterPro" id="IPR010978">
    <property type="entry name" value="tRNA-bd_arm"/>
</dbReference>
<dbReference type="NCBIfam" id="TIGR00468">
    <property type="entry name" value="pheS"/>
    <property type="match status" value="1"/>
</dbReference>
<dbReference type="PANTHER" id="PTHR11538:SF41">
    <property type="entry name" value="PHENYLALANINE--TRNA LIGASE, MITOCHONDRIAL"/>
    <property type="match status" value="1"/>
</dbReference>
<dbReference type="PANTHER" id="PTHR11538">
    <property type="entry name" value="PHENYLALANYL-TRNA SYNTHETASE"/>
    <property type="match status" value="1"/>
</dbReference>
<dbReference type="Pfam" id="PF02912">
    <property type="entry name" value="Phe_tRNA-synt_N"/>
    <property type="match status" value="1"/>
</dbReference>
<dbReference type="Pfam" id="PF01409">
    <property type="entry name" value="tRNA-synt_2d"/>
    <property type="match status" value="1"/>
</dbReference>
<dbReference type="SUPFAM" id="SSF55681">
    <property type="entry name" value="Class II aaRS and biotin synthetases"/>
    <property type="match status" value="1"/>
</dbReference>
<dbReference type="SUPFAM" id="SSF46589">
    <property type="entry name" value="tRNA-binding arm"/>
    <property type="match status" value="1"/>
</dbReference>
<dbReference type="PROSITE" id="PS50862">
    <property type="entry name" value="AA_TRNA_LIGASE_II"/>
    <property type="match status" value="1"/>
</dbReference>
<sequence>MKQEVHRIQEETLAELQQVSTLEALQELKVKVLGKKGSLTAQLRKMGGLSPEERPIFGQVVNETRDILEAAWIRREEELSQTAMLKQLEEEKLDISLPGVSLPQGHQHPLTKVIEEIEEIFLGMGFQIAEGPEIESDYYNFEALNLPKDHPAREMQDSFYITEEILLRTQTSPVQIRTMEKQRPQLPVKIICPGKVYRNDDDATHSPMFHQVEGLMVDRRIRMSDLKGILLSFSRMMFGESREIRLRPSFFPFTEPSAEVDVSCMLCGGAGCRICKGTGWIEILGSGMVHPRVLEMGGYDSKELTGFAFGMGVERIAMLKYGIEDMRLLFDNDLRFLQQF</sequence>
<gene>
    <name evidence="1" type="primary">pheS</name>
    <name type="ordered locus">DSY0271</name>
</gene>
<reference key="1">
    <citation type="journal article" date="2006" name="J. Bacteriol.">
        <title>Complete genome sequence of the dehalorespiring bacterium Desulfitobacterium hafniense Y51 and comparison with Dehalococcoides ethenogenes 195.</title>
        <authorList>
            <person name="Nonaka H."/>
            <person name="Keresztes G."/>
            <person name="Shinoda Y."/>
            <person name="Ikenaga Y."/>
            <person name="Abe M."/>
            <person name="Naito K."/>
            <person name="Inatomi K."/>
            <person name="Furukawa K."/>
            <person name="Inui M."/>
            <person name="Yukawa H."/>
        </authorList>
    </citation>
    <scope>NUCLEOTIDE SEQUENCE [LARGE SCALE GENOMIC DNA]</scope>
    <source>
        <strain>Y51</strain>
    </source>
</reference>
<comment type="catalytic activity">
    <reaction evidence="1">
        <text>tRNA(Phe) + L-phenylalanine + ATP = L-phenylalanyl-tRNA(Phe) + AMP + diphosphate + H(+)</text>
        <dbReference type="Rhea" id="RHEA:19413"/>
        <dbReference type="Rhea" id="RHEA-COMP:9668"/>
        <dbReference type="Rhea" id="RHEA-COMP:9699"/>
        <dbReference type="ChEBI" id="CHEBI:15378"/>
        <dbReference type="ChEBI" id="CHEBI:30616"/>
        <dbReference type="ChEBI" id="CHEBI:33019"/>
        <dbReference type="ChEBI" id="CHEBI:58095"/>
        <dbReference type="ChEBI" id="CHEBI:78442"/>
        <dbReference type="ChEBI" id="CHEBI:78531"/>
        <dbReference type="ChEBI" id="CHEBI:456215"/>
        <dbReference type="EC" id="6.1.1.20"/>
    </reaction>
</comment>
<comment type="cofactor">
    <cofactor evidence="1">
        <name>Mg(2+)</name>
        <dbReference type="ChEBI" id="CHEBI:18420"/>
    </cofactor>
    <text evidence="1">Binds 2 magnesium ions per tetramer.</text>
</comment>
<comment type="subunit">
    <text evidence="1">Tetramer of two alpha and two beta subunits.</text>
</comment>
<comment type="subcellular location">
    <subcellularLocation>
        <location evidence="1">Cytoplasm</location>
    </subcellularLocation>
</comment>
<comment type="similarity">
    <text evidence="1">Belongs to the class-II aminoacyl-tRNA synthetase family. Phe-tRNA synthetase alpha subunit type 1 subfamily.</text>
</comment>
<proteinExistence type="inferred from homology"/>
<feature type="chain" id="PRO_1000006823" description="Phenylalanine--tRNA ligase alpha subunit">
    <location>
        <begin position="1"/>
        <end position="340"/>
    </location>
</feature>
<feature type="binding site" evidence="1">
    <location>
        <position position="255"/>
    </location>
    <ligand>
        <name>Mg(2+)</name>
        <dbReference type="ChEBI" id="CHEBI:18420"/>
        <note>shared with beta subunit</note>
    </ligand>
</feature>
<organism>
    <name type="scientific">Desulfitobacterium hafniense (strain Y51)</name>
    <dbReference type="NCBI Taxonomy" id="138119"/>
    <lineage>
        <taxon>Bacteria</taxon>
        <taxon>Bacillati</taxon>
        <taxon>Bacillota</taxon>
        <taxon>Clostridia</taxon>
        <taxon>Eubacteriales</taxon>
        <taxon>Desulfitobacteriaceae</taxon>
        <taxon>Desulfitobacterium</taxon>
    </lineage>
</organism>
<accession>Q251I2</accession>
<keyword id="KW-0030">Aminoacyl-tRNA synthetase</keyword>
<keyword id="KW-0067">ATP-binding</keyword>
<keyword id="KW-0963">Cytoplasm</keyword>
<keyword id="KW-0436">Ligase</keyword>
<keyword id="KW-0460">Magnesium</keyword>
<keyword id="KW-0479">Metal-binding</keyword>
<keyword id="KW-0547">Nucleotide-binding</keyword>
<keyword id="KW-0648">Protein biosynthesis</keyword>
<keyword id="KW-1185">Reference proteome</keyword>